<dbReference type="EC" id="5.3.1.26" evidence="1"/>
<dbReference type="EMBL" id="BA000034">
    <property type="protein sequence ID" value="BAC63478.1"/>
    <property type="molecule type" value="Genomic_DNA"/>
</dbReference>
<dbReference type="SMR" id="P0DC09"/>
<dbReference type="KEGG" id="sps:SPs0383"/>
<dbReference type="HOGENOM" id="CLU_091396_2_0_9"/>
<dbReference type="UniPathway" id="UPA00702">
    <property type="reaction ID" value="UER00714"/>
</dbReference>
<dbReference type="GO" id="GO:0050044">
    <property type="term" value="F:galactose-6-phosphate isomerase activity"/>
    <property type="evidence" value="ECO:0007669"/>
    <property type="project" value="UniProtKB-UniRule"/>
</dbReference>
<dbReference type="GO" id="GO:0004751">
    <property type="term" value="F:ribose-5-phosphate isomerase activity"/>
    <property type="evidence" value="ECO:0007669"/>
    <property type="project" value="TreeGrafter"/>
</dbReference>
<dbReference type="GO" id="GO:0019316">
    <property type="term" value="P:D-allose catabolic process"/>
    <property type="evidence" value="ECO:0007669"/>
    <property type="project" value="TreeGrafter"/>
</dbReference>
<dbReference type="GO" id="GO:0019388">
    <property type="term" value="P:galactose catabolic process"/>
    <property type="evidence" value="ECO:0007669"/>
    <property type="project" value="UniProtKB-UniPathway"/>
</dbReference>
<dbReference type="GO" id="GO:0019512">
    <property type="term" value="P:lactose catabolic process via tagatose-6-phosphate"/>
    <property type="evidence" value="ECO:0007669"/>
    <property type="project" value="UniProtKB-UniRule"/>
</dbReference>
<dbReference type="GO" id="GO:0009052">
    <property type="term" value="P:pentose-phosphate shunt, non-oxidative branch"/>
    <property type="evidence" value="ECO:0007669"/>
    <property type="project" value="TreeGrafter"/>
</dbReference>
<dbReference type="Gene3D" id="3.40.1400.10">
    <property type="entry name" value="Sugar-phosphate isomerase, RpiB/LacA/LacB"/>
    <property type="match status" value="1"/>
</dbReference>
<dbReference type="HAMAP" id="MF_01556">
    <property type="entry name" value="LacB"/>
    <property type="match status" value="1"/>
</dbReference>
<dbReference type="InterPro" id="IPR004784">
    <property type="entry name" value="LacB"/>
</dbReference>
<dbReference type="InterPro" id="IPR003500">
    <property type="entry name" value="RpiB_LacA_LacB"/>
</dbReference>
<dbReference type="InterPro" id="IPR036569">
    <property type="entry name" value="RpiB_LacA_LacB_sf"/>
</dbReference>
<dbReference type="NCBIfam" id="TIGR01119">
    <property type="entry name" value="lacB"/>
    <property type="match status" value="1"/>
</dbReference>
<dbReference type="NCBIfam" id="NF004051">
    <property type="entry name" value="PRK05571.1"/>
    <property type="match status" value="1"/>
</dbReference>
<dbReference type="NCBIfam" id="NF006381">
    <property type="entry name" value="PRK08622.1"/>
    <property type="match status" value="1"/>
</dbReference>
<dbReference type="NCBIfam" id="NF009258">
    <property type="entry name" value="PRK12615.1"/>
    <property type="match status" value="1"/>
</dbReference>
<dbReference type="NCBIfam" id="TIGR00689">
    <property type="entry name" value="rpiB_lacA_lacB"/>
    <property type="match status" value="1"/>
</dbReference>
<dbReference type="PANTHER" id="PTHR30345:SF0">
    <property type="entry name" value="DNA DAMAGE-REPAIR_TOLERATION PROTEIN DRT102"/>
    <property type="match status" value="1"/>
</dbReference>
<dbReference type="PANTHER" id="PTHR30345">
    <property type="entry name" value="RIBOSE-5-PHOSPHATE ISOMERASE B"/>
    <property type="match status" value="1"/>
</dbReference>
<dbReference type="Pfam" id="PF02502">
    <property type="entry name" value="LacAB_rpiB"/>
    <property type="match status" value="1"/>
</dbReference>
<dbReference type="PIRSF" id="PIRSF005384">
    <property type="entry name" value="RpiB_LacA_B"/>
    <property type="match status" value="1"/>
</dbReference>
<dbReference type="SUPFAM" id="SSF89623">
    <property type="entry name" value="Ribose/Galactose isomerase RpiB/AlsB"/>
    <property type="match status" value="1"/>
</dbReference>
<proteinExistence type="inferred from homology"/>
<comment type="catalytic activity">
    <reaction evidence="1">
        <text>aldehydo-D-galactose 6-phosphate = keto-D-tagatose 6-phosphate</text>
        <dbReference type="Rhea" id="RHEA:13033"/>
        <dbReference type="ChEBI" id="CHEBI:58255"/>
        <dbReference type="ChEBI" id="CHEBI:134283"/>
        <dbReference type="EC" id="5.3.1.26"/>
    </reaction>
</comment>
<comment type="pathway">
    <text evidence="1">Carbohydrate metabolism; D-galactose 6-phosphate degradation; D-tagatose 6-phosphate from D-galactose 6-phosphate: step 1/1.</text>
</comment>
<comment type="subunit">
    <text evidence="1">Heteromultimeric protein consisting of LacA and LacB.</text>
</comment>
<comment type="similarity">
    <text evidence="1">Belongs to the LacAB/RpiB family.</text>
</comment>
<organism>
    <name type="scientific">Streptococcus pyogenes serotype M3 (strain SSI-1)</name>
    <dbReference type="NCBI Taxonomy" id="193567"/>
    <lineage>
        <taxon>Bacteria</taxon>
        <taxon>Bacillati</taxon>
        <taxon>Bacillota</taxon>
        <taxon>Bacilli</taxon>
        <taxon>Lactobacillales</taxon>
        <taxon>Streptococcaceae</taxon>
        <taxon>Streptococcus</taxon>
    </lineage>
</organism>
<sequence>MKIAIGCDHIVTNEKMAVSDFLKSKGYDVIDYGTYDHTRTHYPIFGKKVGEAVVSGQADLGVCICGTGVGINNAVNKVPGIRSALVRDMTTALYAKEELNANVIGFGGKITGELLMCDIIDAFIKAEYKETEENKKLIAKIAHLESHHANQEDPDFFTEFLEKWDRGEYHD</sequence>
<protein>
    <recommendedName>
        <fullName evidence="1">Galactose-6-phosphate isomerase subunit LacB 1</fullName>
        <ecNumber evidence="1">5.3.1.26</ecNumber>
    </recommendedName>
</protein>
<evidence type="ECO:0000255" key="1">
    <source>
        <dbReference type="HAMAP-Rule" id="MF_01556"/>
    </source>
</evidence>
<accession>P0DC09</accession>
<accession>Q79YA1</accession>
<accession>Q8K652</accession>
<gene>
    <name evidence="1" type="primary">lacB1</name>
    <name type="synonym">lacB.1</name>
    <name type="ordered locus">SPs0383</name>
</gene>
<reference key="1">
    <citation type="journal article" date="2003" name="Genome Res.">
        <title>Genome sequence of an M3 strain of Streptococcus pyogenes reveals a large-scale genomic rearrangement in invasive strains and new insights into phage evolution.</title>
        <authorList>
            <person name="Nakagawa I."/>
            <person name="Kurokawa K."/>
            <person name="Yamashita A."/>
            <person name="Nakata M."/>
            <person name="Tomiyasu Y."/>
            <person name="Okahashi N."/>
            <person name="Kawabata S."/>
            <person name="Yamazaki K."/>
            <person name="Shiba T."/>
            <person name="Yasunaga T."/>
            <person name="Hayashi H."/>
            <person name="Hattori M."/>
            <person name="Hamada S."/>
        </authorList>
    </citation>
    <scope>NUCLEOTIDE SEQUENCE [LARGE SCALE GENOMIC DNA]</scope>
    <source>
        <strain>SSI-1</strain>
    </source>
</reference>
<feature type="chain" id="PRO_0000411392" description="Galactose-6-phosphate isomerase subunit LacB 1">
    <location>
        <begin position="1"/>
        <end position="171"/>
    </location>
</feature>
<name>LACB1_STRPQ</name>
<keyword id="KW-0413">Isomerase</keyword>
<keyword id="KW-0423">Lactose metabolism</keyword>